<proteinExistence type="inferred from homology"/>
<sequence length="102" mass="11598">MQGQTIRIRLKAFDYRVLDASTQEIVNTAKRTGAQVRGPIPLPNKIEKFTVLRGPHIDKKSRDQWEIRTHKRLLDIVDPTPQTVDALMKLDLAAGVDIQIKV</sequence>
<keyword id="KW-0687">Ribonucleoprotein</keyword>
<keyword id="KW-0689">Ribosomal protein</keyword>
<comment type="function">
    <text evidence="1">Involved in the binding of tRNA to the ribosomes.</text>
</comment>
<comment type="subunit">
    <text evidence="1">Part of the 30S ribosomal subunit.</text>
</comment>
<comment type="similarity">
    <text evidence="1">Belongs to the universal ribosomal protein uS10 family.</text>
</comment>
<feature type="chain" id="PRO_1000015097" description="Small ribosomal subunit protein uS10">
    <location>
        <begin position="1"/>
        <end position="102"/>
    </location>
</feature>
<name>RS10_CERS1</name>
<gene>
    <name evidence="1" type="primary">rpsJ</name>
    <name type="ordered locus">Rsph17029_0360</name>
</gene>
<reference key="1">
    <citation type="submission" date="2007-02" db="EMBL/GenBank/DDBJ databases">
        <title>Complete sequence of chromosome 1 of Rhodobacter sphaeroides ATCC 17029.</title>
        <authorList>
            <person name="Copeland A."/>
            <person name="Lucas S."/>
            <person name="Lapidus A."/>
            <person name="Barry K."/>
            <person name="Detter J.C."/>
            <person name="Glavina del Rio T."/>
            <person name="Hammon N."/>
            <person name="Israni S."/>
            <person name="Dalin E."/>
            <person name="Tice H."/>
            <person name="Pitluck S."/>
            <person name="Kiss H."/>
            <person name="Brettin T."/>
            <person name="Bruce D."/>
            <person name="Han C."/>
            <person name="Tapia R."/>
            <person name="Gilna P."/>
            <person name="Schmutz J."/>
            <person name="Larimer F."/>
            <person name="Land M."/>
            <person name="Hauser L."/>
            <person name="Kyrpides N."/>
            <person name="Mikhailova N."/>
            <person name="Richardson P."/>
            <person name="Mackenzie C."/>
            <person name="Choudhary M."/>
            <person name="Donohue T.J."/>
            <person name="Kaplan S."/>
        </authorList>
    </citation>
    <scope>NUCLEOTIDE SEQUENCE [LARGE SCALE GENOMIC DNA]</scope>
    <source>
        <strain>ATCC 17029 / ATH 2.4.9</strain>
    </source>
</reference>
<dbReference type="EMBL" id="CP000577">
    <property type="protein sequence ID" value="ABN75476.1"/>
    <property type="molecule type" value="Genomic_DNA"/>
</dbReference>
<dbReference type="RefSeq" id="WP_002722490.1">
    <property type="nucleotide sequence ID" value="NC_009049.1"/>
</dbReference>
<dbReference type="SMR" id="A3PGL0"/>
<dbReference type="GeneID" id="67445499"/>
<dbReference type="KEGG" id="rsh:Rsph17029_0360"/>
<dbReference type="HOGENOM" id="CLU_122625_1_3_5"/>
<dbReference type="GO" id="GO:1990904">
    <property type="term" value="C:ribonucleoprotein complex"/>
    <property type="evidence" value="ECO:0007669"/>
    <property type="project" value="UniProtKB-KW"/>
</dbReference>
<dbReference type="GO" id="GO:0005840">
    <property type="term" value="C:ribosome"/>
    <property type="evidence" value="ECO:0007669"/>
    <property type="project" value="UniProtKB-KW"/>
</dbReference>
<dbReference type="GO" id="GO:0003735">
    <property type="term" value="F:structural constituent of ribosome"/>
    <property type="evidence" value="ECO:0007669"/>
    <property type="project" value="InterPro"/>
</dbReference>
<dbReference type="GO" id="GO:0000049">
    <property type="term" value="F:tRNA binding"/>
    <property type="evidence" value="ECO:0007669"/>
    <property type="project" value="UniProtKB-UniRule"/>
</dbReference>
<dbReference type="GO" id="GO:0006412">
    <property type="term" value="P:translation"/>
    <property type="evidence" value="ECO:0007669"/>
    <property type="project" value="UniProtKB-UniRule"/>
</dbReference>
<dbReference type="FunFam" id="3.30.70.600:FF:000001">
    <property type="entry name" value="30S ribosomal protein S10"/>
    <property type="match status" value="1"/>
</dbReference>
<dbReference type="Gene3D" id="3.30.70.600">
    <property type="entry name" value="Ribosomal protein S10 domain"/>
    <property type="match status" value="1"/>
</dbReference>
<dbReference type="HAMAP" id="MF_00508">
    <property type="entry name" value="Ribosomal_uS10"/>
    <property type="match status" value="1"/>
</dbReference>
<dbReference type="InterPro" id="IPR001848">
    <property type="entry name" value="Ribosomal_uS10"/>
</dbReference>
<dbReference type="InterPro" id="IPR027486">
    <property type="entry name" value="Ribosomal_uS10_dom"/>
</dbReference>
<dbReference type="InterPro" id="IPR036838">
    <property type="entry name" value="Ribosomal_uS10_dom_sf"/>
</dbReference>
<dbReference type="NCBIfam" id="NF001861">
    <property type="entry name" value="PRK00596.1"/>
    <property type="match status" value="1"/>
</dbReference>
<dbReference type="NCBIfam" id="TIGR01049">
    <property type="entry name" value="rpsJ_bact"/>
    <property type="match status" value="1"/>
</dbReference>
<dbReference type="PANTHER" id="PTHR11700">
    <property type="entry name" value="30S RIBOSOMAL PROTEIN S10 FAMILY MEMBER"/>
    <property type="match status" value="1"/>
</dbReference>
<dbReference type="Pfam" id="PF00338">
    <property type="entry name" value="Ribosomal_S10"/>
    <property type="match status" value="1"/>
</dbReference>
<dbReference type="PRINTS" id="PR00971">
    <property type="entry name" value="RIBOSOMALS10"/>
</dbReference>
<dbReference type="SMART" id="SM01403">
    <property type="entry name" value="Ribosomal_S10"/>
    <property type="match status" value="1"/>
</dbReference>
<dbReference type="SUPFAM" id="SSF54999">
    <property type="entry name" value="Ribosomal protein S10"/>
    <property type="match status" value="1"/>
</dbReference>
<organism>
    <name type="scientific">Cereibacter sphaeroides (strain ATCC 17029 / ATH 2.4.9)</name>
    <name type="common">Rhodobacter sphaeroides</name>
    <dbReference type="NCBI Taxonomy" id="349101"/>
    <lineage>
        <taxon>Bacteria</taxon>
        <taxon>Pseudomonadati</taxon>
        <taxon>Pseudomonadota</taxon>
        <taxon>Alphaproteobacteria</taxon>
        <taxon>Rhodobacterales</taxon>
        <taxon>Paracoccaceae</taxon>
        <taxon>Cereibacter</taxon>
    </lineage>
</organism>
<accession>A3PGL0</accession>
<evidence type="ECO:0000255" key="1">
    <source>
        <dbReference type="HAMAP-Rule" id="MF_00508"/>
    </source>
</evidence>
<evidence type="ECO:0000305" key="2"/>
<protein>
    <recommendedName>
        <fullName evidence="1">Small ribosomal subunit protein uS10</fullName>
    </recommendedName>
    <alternativeName>
        <fullName evidence="2">30S ribosomal protein S10</fullName>
    </alternativeName>
</protein>